<evidence type="ECO:0000250" key="1"/>
<evidence type="ECO:0000305" key="2"/>
<dbReference type="EC" id="3.1.27.-"/>
<dbReference type="EMBL" id="X04370">
    <property type="protein sequence ID" value="CAA27900.1"/>
    <property type="molecule type" value="Genomic_DNA"/>
</dbReference>
<dbReference type="PIR" id="H27342">
    <property type="entry name" value="WZBE17"/>
</dbReference>
<dbReference type="Proteomes" id="UP000002602">
    <property type="component" value="Genome"/>
</dbReference>
<dbReference type="GO" id="GO:0044423">
    <property type="term" value="C:virion component"/>
    <property type="evidence" value="ECO:0007669"/>
    <property type="project" value="UniProtKB-KW"/>
</dbReference>
<dbReference type="GO" id="GO:0004519">
    <property type="term" value="F:endonuclease activity"/>
    <property type="evidence" value="ECO:0007669"/>
    <property type="project" value="UniProtKB-KW"/>
</dbReference>
<dbReference type="GO" id="GO:0003723">
    <property type="term" value="F:RNA binding"/>
    <property type="evidence" value="ECO:0007669"/>
    <property type="project" value="UniProtKB-KW"/>
</dbReference>
<dbReference type="GO" id="GO:0039595">
    <property type="term" value="P:symbiont-mediated degradation of host mRNA"/>
    <property type="evidence" value="ECO:0007669"/>
    <property type="project" value="UniProtKB-KW"/>
</dbReference>
<dbReference type="GO" id="GO:0039657">
    <property type="term" value="P:symbiont-mediated suppression of host gene expression"/>
    <property type="evidence" value="ECO:0007669"/>
    <property type="project" value="UniProtKB-KW"/>
</dbReference>
<dbReference type="Gene3D" id="3.40.50.1010">
    <property type="entry name" value="5'-nuclease"/>
    <property type="match status" value="1"/>
</dbReference>
<dbReference type="InterPro" id="IPR029060">
    <property type="entry name" value="PIN-like_dom_sf"/>
</dbReference>
<dbReference type="SUPFAM" id="SSF88723">
    <property type="entry name" value="PIN domain-like"/>
    <property type="match status" value="1"/>
</dbReference>
<name>SHUT_VZVD</name>
<sequence length="455" mass="51368">MGLFGLTRFIHEHKLVKPSIISTPPGVLTPVAVDVWNVMYTLLERLYPVGKRENLHGPSVTIHCLGVLLRLLTQRSYYPIFVLERCTDGPLSRGAKAIMSRAMNHDERGTSDLTRVLLSSNTSCSIKYNKTSETYDSVFRNSSTSCIPSEENKSQDMFLDGCPRQTDKTICLRDQNVCSLTSTMPSRGHPNHRLYHKLCASLIRWMGYAYVEAVDIEADEACANLFHTRTVALVYTTDTDLLFMGCDILLDAIPMFAPVVRCRDLLQYLGITYPEFLVAFVRCQTDLHTSDNLKSVQQVIQDTGLKVPHQMDTSTRSPTYDSWRHGEVFKSLTVATSGKTENGVSVSKYASNRSEVTVDASWALNLLPPSSSPLDNLERAFVEHIIAVVTPLTRGRLKLMKRVNIMQNTADPYMVINTLYHNLKGEKMARQYARIFKQFIPTPLPLNTVLTKYWN</sequence>
<reference key="1">
    <citation type="journal article" date="1986" name="J. Gen. Virol.">
        <title>The complete DNA sequence of varicella-zoster virus.</title>
        <authorList>
            <person name="Davison A.J."/>
            <person name="Scott J.E."/>
        </authorList>
    </citation>
    <scope>NUCLEOTIDE SEQUENCE [LARGE SCALE GENOMIC DNA]</scope>
</reference>
<organismHost>
    <name type="scientific">Homo sapiens</name>
    <name type="common">Human</name>
    <dbReference type="NCBI Taxonomy" id="9606"/>
</organismHost>
<proteinExistence type="inferred from homology"/>
<feature type="chain" id="PRO_0000116059" description="Virion host shutoff protein">
    <location>
        <begin position="1"/>
        <end position="455"/>
    </location>
</feature>
<keyword id="KW-1132">Decay of host mRNAs by virus</keyword>
<keyword id="KW-0255">Endonuclease</keyword>
<keyword id="KW-1262">Eukaryotic host gene expression shutoff by virus</keyword>
<keyword id="KW-1190">Host gene expression shutoff by virus</keyword>
<keyword id="KW-1192">Host mRNA suppression by virus</keyword>
<keyword id="KW-0945">Host-virus interaction</keyword>
<keyword id="KW-0378">Hydrolase</keyword>
<keyword id="KW-0540">Nuclease</keyword>
<keyword id="KW-1185">Reference proteome</keyword>
<keyword id="KW-0694">RNA-binding</keyword>
<keyword id="KW-0946">Virion</keyword>
<accession>P09275</accession>
<comment type="function">
    <text evidence="1">Minor structural protein that acts as an endoribonuclease during lytic infection. Degrades host mRNAs in the cytoplasm by cutting them at preferred sites, including some in regions of translation initiation (By similarity).</text>
</comment>
<comment type="subcellular location">
    <subcellularLocation>
        <location evidence="2">Virion</location>
    </subcellularLocation>
</comment>
<comment type="similarity">
    <text evidence="2">Belongs to the herpesviridae VHS protein family.</text>
</comment>
<organism>
    <name type="scientific">Varicella-zoster virus (strain Dumas)</name>
    <name type="common">HHV-3</name>
    <name type="synonym">Human herpesvirus 3</name>
    <dbReference type="NCBI Taxonomy" id="10338"/>
    <lineage>
        <taxon>Viruses</taxon>
        <taxon>Duplodnaviria</taxon>
        <taxon>Heunggongvirae</taxon>
        <taxon>Peploviricota</taxon>
        <taxon>Herviviricetes</taxon>
        <taxon>Herpesvirales</taxon>
        <taxon>Orthoherpesviridae</taxon>
        <taxon>Alphaherpesvirinae</taxon>
        <taxon>Varicellovirus</taxon>
        <taxon>Varicellovirus humanalpha3</taxon>
        <taxon>Human herpesvirus 3</taxon>
    </lineage>
</organism>
<protein>
    <recommendedName>
        <fullName>Virion host shutoff protein</fullName>
        <shortName>Vhs</shortName>
        <ecNumber>3.1.27.-</ecNumber>
    </recommendedName>
</protein>
<gene>
    <name type="primary">17</name>
</gene>